<organismHost>
    <name type="scientific">Bacillus subtilis</name>
    <dbReference type="NCBI Taxonomy" id="1423"/>
</organismHost>
<dbReference type="EMBL" id="X97918">
    <property type="protein sequence ID" value="CAA66517.2"/>
    <property type="molecule type" value="Genomic_DNA"/>
</dbReference>
<dbReference type="PIR" id="T42310">
    <property type="entry name" value="T42310"/>
</dbReference>
<dbReference type="RefSeq" id="NP_690701.2">
    <property type="nucleotide sequence ID" value="NC_004166.2"/>
</dbReference>
<dbReference type="SMR" id="O48470"/>
<dbReference type="TCDB" id="1.E.31.1.13">
    <property type="family name" value="the spp1 holin (spp1 holin) family"/>
</dbReference>
<dbReference type="KEGG" id="vg:955351"/>
<dbReference type="Proteomes" id="UP000002559">
    <property type="component" value="Genome"/>
</dbReference>
<dbReference type="GO" id="GO:0020002">
    <property type="term" value="C:host cell plasma membrane"/>
    <property type="evidence" value="ECO:0000314"/>
    <property type="project" value="CACAO"/>
</dbReference>
<dbReference type="GO" id="GO:0016020">
    <property type="term" value="C:membrane"/>
    <property type="evidence" value="ECO:0007669"/>
    <property type="project" value="UniProtKB-KW"/>
</dbReference>
<dbReference type="GO" id="GO:0031640">
    <property type="term" value="P:killing of cells of another organism"/>
    <property type="evidence" value="ECO:0007669"/>
    <property type="project" value="UniProtKB-KW"/>
</dbReference>
<dbReference type="InterPro" id="IPR019715">
    <property type="entry name" value="Haemolysin_XhlA"/>
</dbReference>
<dbReference type="Pfam" id="PF10779">
    <property type="entry name" value="XhlA"/>
    <property type="match status" value="1"/>
</dbReference>
<reference key="1">
    <citation type="journal article" date="1997" name="Gene">
        <title>The complete nucleotide sequence and functional organization of Bacillus subtilis bacteriophage SPP1.</title>
        <authorList>
            <person name="Alonso J.C."/>
            <person name="Luder G."/>
            <person name="Stiege A.C."/>
            <person name="Chai S."/>
            <person name="Weise F."/>
            <person name="Trautner T.A."/>
        </authorList>
    </citation>
    <scope>NUCLEOTIDE SEQUENCE [LARGE SCALE GENOMIC DNA]</scope>
</reference>
<reference key="2">
    <citation type="journal article" date="2016" name="Mol. Microbiol.">
        <title>More than a hole: the holin lethal function may be required to fully sensitize bacteria to the lytic action of canonical endolysins.</title>
        <authorList>
            <person name="Fernandes S."/>
            <person name="Sao-Jose C."/>
        </authorList>
    </citation>
    <scope>FUNCTION</scope>
</reference>
<reference key="3">
    <citation type="journal article" date="2017" name="Virology">
        <title>Probing the function of the two holin-like proteins of bacteriophage SPP1.</title>
        <authorList>
            <person name="Fernandes S."/>
            <person name="Sao-Jose C."/>
        </authorList>
    </citation>
    <scope>SUBCELLULAR LOCATION</scope>
</reference>
<accession>O48470</accession>
<sequence length="83" mass="9530">MEQMRQDIIELKQNDKSQEQRISLLERTSDRHDQQIQAVTESLSKIHENTTWIKRTITGAIISTLSTVVVGGILTIVWNLVKN</sequence>
<name>HOL24_BPSPP</name>
<evidence type="ECO:0000255" key="1"/>
<evidence type="ECO:0000269" key="2">
    <source>
    </source>
</evidence>
<evidence type="ECO:0000305" key="3"/>
<evidence type="ECO:0000305" key="4">
    <source>
    </source>
</evidence>
<evidence type="ECO:0000312" key="5">
    <source>
        <dbReference type="EMBL" id="CAA66517.2"/>
    </source>
</evidence>
<gene>
    <name type="primary">24.1</name>
</gene>
<organism>
    <name type="scientific">Bacillus phage SPP1</name>
    <name type="common">Bacteriophage SPP1</name>
    <dbReference type="NCBI Taxonomy" id="10724"/>
    <lineage>
        <taxon>Viruses</taxon>
        <taxon>Duplodnaviria</taxon>
        <taxon>Heunggongvirae</taxon>
        <taxon>Uroviricota</taxon>
        <taxon>Caudoviricetes</taxon>
    </lineage>
</organism>
<proteinExistence type="inferred from homology"/>
<protein>
    <recommendedName>
        <fullName evidence="5">Holin-like protein 24.1</fullName>
    </recommendedName>
    <alternativeName>
        <fullName evidence="3">Gene product 24.1</fullName>
        <shortName evidence="3">gp24.1</shortName>
    </alternativeName>
</protein>
<comment type="function">
    <text evidence="4">Probably functions as a holin together with holin-like protein 26. Accumulates harmlessly in the cytoplasmic membrane until it reaches a critical concentration that triggers the formation of micron-scale pores (holes) causing host cell membrane disruption and endolysin escape into the periplasmic space. Determines the precise timing of host cell lysis.</text>
</comment>
<comment type="subcellular location">
    <subcellularLocation>
        <location evidence="2">Host cell inner membrane</location>
        <topology evidence="1">Single-pass membrane protein</topology>
    </subcellularLocation>
</comment>
<keyword id="KW-0175">Coiled coil</keyword>
<keyword id="KW-0204">Cytolysis</keyword>
<keyword id="KW-1030">Host cell inner membrane</keyword>
<keyword id="KW-0578">Host cell lysis by virus</keyword>
<keyword id="KW-1032">Host cell membrane</keyword>
<keyword id="KW-1043">Host membrane</keyword>
<keyword id="KW-0472">Membrane</keyword>
<keyword id="KW-1185">Reference proteome</keyword>
<keyword id="KW-0812">Transmembrane</keyword>
<keyword id="KW-1133">Transmembrane helix</keyword>
<keyword id="KW-1188">Viral release from host cell</keyword>
<feature type="chain" id="PRO_0000439630" description="Holin-like protein 24.1">
    <location>
        <begin position="1"/>
        <end position="83"/>
    </location>
</feature>
<feature type="transmembrane region" description="Helical" evidence="1">
    <location>
        <begin position="57"/>
        <end position="77"/>
    </location>
</feature>
<feature type="coiled-coil region" evidence="1">
    <location>
        <begin position="1"/>
        <end position="45"/>
    </location>
</feature>